<gene>
    <name type="primary">PRND</name>
</gene>
<proteinExistence type="evidence at protein level"/>
<sequence length="178" mass="20648">MRKHLGGCWLAIVCVLLFSQLSSVKARGIKHRIKWNRKVLPSTSQVTEAHTAEIRPGAFIKQGRKLDINFGVEGNRYYEANYWQFPDGIHYNGCSEANVTKEKFVTSCINATQVANQEELSREKQDNKLYQRVLWQLIRELCSIKHCDFWLERGAGLQVTLDQPMMLCLLVFIWFIVK</sequence>
<dbReference type="EMBL" id="AJ278010">
    <property type="protein sequence ID" value="CAC22340.1"/>
    <property type="molecule type" value="mRNA"/>
</dbReference>
<dbReference type="EMBL" id="AJ251331">
    <property type="protein sequence ID" value="CAB96388.1"/>
    <property type="molecule type" value="Genomic_DNA"/>
</dbReference>
<dbReference type="EMBL" id="AY017311">
    <property type="protein sequence ID" value="AAK08630.1"/>
    <property type="molecule type" value="Genomic_DNA"/>
</dbReference>
<dbReference type="EMBL" id="AF394223">
    <property type="protein sequence ID" value="AAK77164.1"/>
    <property type="molecule type" value="Genomic_DNA"/>
</dbReference>
<dbReference type="RefSeq" id="NP_001009261.1">
    <property type="nucleotide sequence ID" value="NM_001009261.1"/>
</dbReference>
<dbReference type="PDB" id="2M1J">
    <property type="method" value="NMR"/>
    <property type="chains" value="A=1-30"/>
</dbReference>
<dbReference type="PDBsum" id="2M1J"/>
<dbReference type="BMRB" id="Q9GJY2"/>
<dbReference type="SMR" id="Q9GJY2"/>
<dbReference type="STRING" id="9940.ENSOARP00000005010"/>
<dbReference type="GlyCosmos" id="Q9GJY2">
    <property type="glycosylation" value="2 sites, No reported glycans"/>
</dbReference>
<dbReference type="PaxDb" id="9940-ENSOARP00000005010"/>
<dbReference type="Ensembl" id="ENSOART00040045312">
    <property type="protein sequence ID" value="ENSOARP00040022845"/>
    <property type="gene ID" value="ENSOARG00040027442"/>
</dbReference>
<dbReference type="Ensembl" id="ENSOART00180014963">
    <property type="protein sequence ID" value="ENSOARP00180007858"/>
    <property type="gene ID" value="ENSOARG00180009026"/>
</dbReference>
<dbReference type="Ensembl" id="ENSOART00185024723">
    <property type="protein sequence ID" value="ENSOARP00185011427"/>
    <property type="gene ID" value="ENSOARG00185015326"/>
</dbReference>
<dbReference type="Ensembl" id="ENSOART00215025558">
    <property type="protein sequence ID" value="ENSOARP00215013377"/>
    <property type="gene ID" value="ENSOARG00215015217"/>
</dbReference>
<dbReference type="Ensembl" id="ENSOART00220043238">
    <property type="protein sequence ID" value="ENSOARP00220023313"/>
    <property type="gene ID" value="ENSOARG00220025909"/>
</dbReference>
<dbReference type="Ensembl" id="ENSOART00225039181">
    <property type="protein sequence ID" value="ENSOARP00225019215"/>
    <property type="gene ID" value="ENSOARG00225023888"/>
</dbReference>
<dbReference type="Ensembl" id="ENSOART00260024392">
    <property type="protein sequence ID" value="ENSOARP00260012225"/>
    <property type="gene ID" value="ENSOARG00260015081"/>
</dbReference>
<dbReference type="GeneID" id="443194"/>
<dbReference type="KEGG" id="oas:443194"/>
<dbReference type="CTD" id="23627"/>
<dbReference type="eggNOG" id="ENOG502RAT9">
    <property type="taxonomic scope" value="Eukaryota"/>
</dbReference>
<dbReference type="HOGENOM" id="CLU_1524583_0_0_1"/>
<dbReference type="OMA" id="HYDGCSE"/>
<dbReference type="OrthoDB" id="9523143at2759"/>
<dbReference type="EvolutionaryTrace" id="Q9GJY2"/>
<dbReference type="Proteomes" id="UP000002356">
    <property type="component" value="Chromosome 13"/>
</dbReference>
<dbReference type="Bgee" id="ENSOARG00000004683">
    <property type="expression patterns" value="Expressed in testis and 40 other cell types or tissues"/>
</dbReference>
<dbReference type="GO" id="GO:0009897">
    <property type="term" value="C:external side of plasma membrane"/>
    <property type="evidence" value="ECO:0000250"/>
    <property type="project" value="UniProtKB"/>
</dbReference>
<dbReference type="GO" id="GO:0005507">
    <property type="term" value="F:copper ion binding"/>
    <property type="evidence" value="ECO:0000250"/>
    <property type="project" value="UniProtKB"/>
</dbReference>
<dbReference type="GO" id="GO:0007340">
    <property type="term" value="P:acrosome reaction"/>
    <property type="evidence" value="ECO:0000250"/>
    <property type="project" value="UniProtKB"/>
</dbReference>
<dbReference type="GO" id="GO:0051260">
    <property type="term" value="P:protein homooligomerization"/>
    <property type="evidence" value="ECO:0007669"/>
    <property type="project" value="InterPro"/>
</dbReference>
<dbReference type="FunFam" id="1.10.790.10:FF:000002">
    <property type="entry name" value="Prion-like protein doppel"/>
    <property type="match status" value="1"/>
</dbReference>
<dbReference type="Gene3D" id="1.10.790.10">
    <property type="entry name" value="Prion/Doppel protein, beta-ribbon domain"/>
    <property type="match status" value="1"/>
</dbReference>
<dbReference type="InterPro" id="IPR021566">
    <property type="entry name" value="Doppel"/>
</dbReference>
<dbReference type="InterPro" id="IPR036924">
    <property type="entry name" value="Prion/Doppel_b-ribbon_dom_sf"/>
</dbReference>
<dbReference type="InterPro" id="IPR022416">
    <property type="entry name" value="Prion/Doppel_prot_b-ribbon_dom"/>
</dbReference>
<dbReference type="PANTHER" id="PTHR15506">
    <property type="entry name" value="DOPPEL PRION"/>
    <property type="match status" value="1"/>
</dbReference>
<dbReference type="PANTHER" id="PTHR15506:SF0">
    <property type="entry name" value="PRION-LIKE PROTEIN DOPPEL"/>
    <property type="match status" value="1"/>
</dbReference>
<dbReference type="Pfam" id="PF11466">
    <property type="entry name" value="Doppel"/>
    <property type="match status" value="1"/>
</dbReference>
<dbReference type="Pfam" id="PF00377">
    <property type="entry name" value="Prion"/>
    <property type="match status" value="1"/>
</dbReference>
<dbReference type="SUPFAM" id="SSF54098">
    <property type="entry name" value="Prion-like"/>
    <property type="match status" value="1"/>
</dbReference>
<evidence type="ECO:0000250" key="1"/>
<evidence type="ECO:0000250" key="2">
    <source>
        <dbReference type="UniProtKB" id="Q9QUG3"/>
    </source>
</evidence>
<evidence type="ECO:0000250" key="3">
    <source>
        <dbReference type="UniProtKB" id="Q9UKY0"/>
    </source>
</evidence>
<evidence type="ECO:0000255" key="4"/>
<evidence type="ECO:0000269" key="5">
    <source>
    </source>
</evidence>
<evidence type="ECO:0000305" key="6"/>
<evidence type="ECO:0007829" key="7">
    <source>
        <dbReference type="PDB" id="2M1J"/>
    </source>
</evidence>
<reference key="1">
    <citation type="journal article" date="2001" name="Mamm. Genome">
        <title>The PrP-like protein Doppel gene in sheep and cattle: cDNA sequence and expression.</title>
        <authorList>
            <person name="Tranulis M.A."/>
            <person name="Espenes A."/>
            <person name="Comincini S."/>
            <person name="Skretting G."/>
            <person name="Harbitz I."/>
        </authorList>
    </citation>
    <scope>NUCLEOTIDE SEQUENCE [GENOMIC DNA / MRNA]</scope>
    <scope>TISSUE SPECIFICITY</scope>
    <source>
        <tissue>Testis</tissue>
    </source>
</reference>
<reference key="2">
    <citation type="journal article" date="2001" name="Mamm. Genome">
        <title>Genomic organization, comparative analysis, and genetic polymorphisms of the bovine and ovine prion Doppel genes (PRND).</title>
        <authorList>
            <person name="Comincini S."/>
            <person name="Foti M.G."/>
            <person name="Tranulis M.A."/>
            <person name="Hills D."/>
            <person name="Di Guardo G."/>
            <person name="Vaccari G."/>
            <person name="Williams J.L."/>
            <person name="Harbitz I."/>
            <person name="Ferretti L."/>
        </authorList>
    </citation>
    <scope>NUCLEOTIDE SEQUENCE [GENOMIC DNA / MRNA]</scope>
</reference>
<reference key="3">
    <citation type="submission" date="2001-06" db="EMBL/GenBank/DDBJ databases">
        <title>Sequence and expression in transgenic mice of the ovine doppel-encoding gene.</title>
        <authorList>
            <person name="Essalmani R."/>
            <person name="Taourit S."/>
            <person name="Besnard N."/>
            <person name="Vilotte J.-L."/>
        </authorList>
    </citation>
    <scope>NUCLEOTIDE SEQUENCE [GENOMIC DNA]</scope>
</reference>
<protein>
    <recommendedName>
        <fullName>Prion-like protein doppel</fullName>
    </recommendedName>
    <alternativeName>
        <fullName>PrPLP</fullName>
    </alternativeName>
</protein>
<organism>
    <name type="scientific">Ovis aries</name>
    <name type="common">Sheep</name>
    <dbReference type="NCBI Taxonomy" id="9940"/>
    <lineage>
        <taxon>Eukaryota</taxon>
        <taxon>Metazoa</taxon>
        <taxon>Chordata</taxon>
        <taxon>Craniata</taxon>
        <taxon>Vertebrata</taxon>
        <taxon>Euteleostomi</taxon>
        <taxon>Mammalia</taxon>
        <taxon>Eutheria</taxon>
        <taxon>Laurasiatheria</taxon>
        <taxon>Artiodactyla</taxon>
        <taxon>Ruminantia</taxon>
        <taxon>Pecora</taxon>
        <taxon>Bovidae</taxon>
        <taxon>Caprinae</taxon>
        <taxon>Ovis</taxon>
    </lineage>
</organism>
<comment type="function">
    <text evidence="2 3">Required for normal acrosome reaction and for normal male fertility (By similarity). Can bind Cu(2+) (By similarity).</text>
</comment>
<comment type="subcellular location">
    <subcellularLocation>
        <location evidence="2">Cell membrane</location>
        <topology evidence="2">Lipid-anchor</topology>
        <topology evidence="2">GPI-anchor</topology>
    </subcellularLocation>
</comment>
<comment type="tissue specificity">
    <text evidence="5">Strongly expressed in testis. Detected at low levels in lymph node, spleen and ovary.</text>
</comment>
<comment type="domain">
    <text evidence="3">A short helical region is required and sufficient for Cu(2+) binding.</text>
</comment>
<comment type="PTM">
    <text evidence="2">N-glycosylated.</text>
</comment>
<comment type="PTM">
    <text evidence="3">O-glycosylated.</text>
</comment>
<comment type="similarity">
    <text evidence="6">Belongs to the prion family.</text>
</comment>
<name>PRND_SHEEP</name>
<accession>Q9GJY2</accession>
<accession>Q9MYU2</accession>
<feature type="signal peptide" evidence="3">
    <location>
        <begin position="1"/>
        <end position="25"/>
    </location>
</feature>
<feature type="chain" id="PRO_0000025749" description="Prion-like protein doppel">
    <location>
        <begin position="26"/>
        <end position="154"/>
    </location>
</feature>
<feature type="propeptide" id="PRO_0000025750" description="Removed in mature form" evidence="1">
    <location>
        <begin position="155"/>
        <end position="178"/>
    </location>
</feature>
<feature type="region of interest" description="Flexible tail" evidence="1">
    <location>
        <begin position="27"/>
        <end position="50"/>
    </location>
</feature>
<feature type="region of interest" description="Globular" evidence="1">
    <location>
        <begin position="51"/>
        <end position="154"/>
    </location>
</feature>
<feature type="region of interest" description="Cu(2+) binding" evidence="3">
    <location>
        <begin position="124"/>
        <end position="141"/>
    </location>
</feature>
<feature type="lipid moiety-binding region" description="GPI-anchor amidated glycine" evidence="4">
    <location>
        <position position="154"/>
    </location>
</feature>
<feature type="glycosylation site" description="N-linked (GlcNAc...) asparagine" evidence="4">
    <location>
        <position position="98"/>
    </location>
</feature>
<feature type="glycosylation site" description="N-linked (GlcNAc...) asparagine" evidence="4">
    <location>
        <position position="110"/>
    </location>
</feature>
<feature type="disulfide bond" evidence="2">
    <location>
        <begin position="94"/>
        <end position="147"/>
    </location>
</feature>
<feature type="disulfide bond" evidence="2">
    <location>
        <begin position="108"/>
        <end position="142"/>
    </location>
</feature>
<feature type="helix" evidence="7">
    <location>
        <begin position="10"/>
        <end position="22"/>
    </location>
</feature>
<feature type="turn" evidence="7">
    <location>
        <begin position="23"/>
        <end position="25"/>
    </location>
</feature>
<keyword id="KW-0002">3D-structure</keyword>
<keyword id="KW-0034">Amyloid</keyword>
<keyword id="KW-1003">Cell membrane</keyword>
<keyword id="KW-0186">Copper</keyword>
<keyword id="KW-1015">Disulfide bond</keyword>
<keyword id="KW-0278">Fertilization</keyword>
<keyword id="KW-0325">Glycoprotein</keyword>
<keyword id="KW-0336">GPI-anchor</keyword>
<keyword id="KW-0449">Lipoprotein</keyword>
<keyword id="KW-0472">Membrane</keyword>
<keyword id="KW-0479">Metal-binding</keyword>
<keyword id="KW-0640">Prion</keyword>
<keyword id="KW-1185">Reference proteome</keyword>
<keyword id="KW-0732">Signal</keyword>